<protein>
    <recommendedName>
        <fullName evidence="1">Large ribosomal subunit protein uL5</fullName>
    </recommendedName>
    <alternativeName>
        <fullName evidence="2">50S ribosomal protein L5</fullName>
    </alternativeName>
</protein>
<reference key="1">
    <citation type="journal article" date="2007" name="Science">
        <title>Legumes symbioses: absence of nod genes in photosynthetic bradyrhizobia.</title>
        <authorList>
            <person name="Giraud E."/>
            <person name="Moulin L."/>
            <person name="Vallenet D."/>
            <person name="Barbe V."/>
            <person name="Cytryn E."/>
            <person name="Avarre J.-C."/>
            <person name="Jaubert M."/>
            <person name="Simon D."/>
            <person name="Cartieaux F."/>
            <person name="Prin Y."/>
            <person name="Bena G."/>
            <person name="Hannibal L."/>
            <person name="Fardoux J."/>
            <person name="Kojadinovic M."/>
            <person name="Vuillet L."/>
            <person name="Lajus A."/>
            <person name="Cruveiller S."/>
            <person name="Rouy Z."/>
            <person name="Mangenot S."/>
            <person name="Segurens B."/>
            <person name="Dossat C."/>
            <person name="Franck W.L."/>
            <person name="Chang W.-S."/>
            <person name="Saunders E."/>
            <person name="Bruce D."/>
            <person name="Richardson P."/>
            <person name="Normand P."/>
            <person name="Dreyfus B."/>
            <person name="Pignol D."/>
            <person name="Stacey G."/>
            <person name="Emerich D."/>
            <person name="Vermeglio A."/>
            <person name="Medigue C."/>
            <person name="Sadowsky M."/>
        </authorList>
    </citation>
    <scope>NUCLEOTIDE SEQUENCE [LARGE SCALE GENOMIC DNA]</scope>
    <source>
        <strain>ORS 278</strain>
    </source>
</reference>
<sequence>MAETAYTPRLRTEYDRKIKSALTEKFGYANVMQVPRLDKVVLNMGIGEAVNDRKKAETAAADLSLIAGQKAVVTYSRVAIATFKLRENQPIGCKVTLRKAKMYEFIDRLINVALPRVRDFRGLNPKSFDGRGNYSLGIKEHIIFPEIDFDKAGESWGMDITVCTTATTDDEARALLTAFNFPFRQ</sequence>
<keyword id="KW-1185">Reference proteome</keyword>
<keyword id="KW-0687">Ribonucleoprotein</keyword>
<keyword id="KW-0689">Ribosomal protein</keyword>
<keyword id="KW-0694">RNA-binding</keyword>
<keyword id="KW-0699">rRNA-binding</keyword>
<keyword id="KW-0820">tRNA-binding</keyword>
<name>RL5_BRASO</name>
<comment type="function">
    <text evidence="1">This is one of the proteins that bind and probably mediate the attachment of the 5S RNA into the large ribosomal subunit, where it forms part of the central protuberance. In the 70S ribosome it contacts protein S13 of the 30S subunit (bridge B1b), connecting the 2 subunits; this bridge is implicated in subunit movement. Contacts the P site tRNA; the 5S rRNA and some of its associated proteins might help stabilize positioning of ribosome-bound tRNAs.</text>
</comment>
<comment type="subunit">
    <text evidence="1">Part of the 50S ribosomal subunit; part of the 5S rRNA/L5/L18/L25 subcomplex. Contacts the 5S rRNA and the P site tRNA. Forms a bridge to the 30S subunit in the 70S ribosome.</text>
</comment>
<comment type="similarity">
    <text evidence="1">Belongs to the universal ribosomal protein uL5 family.</text>
</comment>
<proteinExistence type="inferred from homology"/>
<accession>A4YSK4</accession>
<organism>
    <name type="scientific">Bradyrhizobium sp. (strain ORS 278)</name>
    <dbReference type="NCBI Taxonomy" id="114615"/>
    <lineage>
        <taxon>Bacteria</taxon>
        <taxon>Pseudomonadati</taxon>
        <taxon>Pseudomonadota</taxon>
        <taxon>Alphaproteobacteria</taxon>
        <taxon>Hyphomicrobiales</taxon>
        <taxon>Nitrobacteraceae</taxon>
        <taxon>Bradyrhizobium</taxon>
    </lineage>
</organism>
<feature type="chain" id="PRO_1000052698" description="Large ribosomal subunit protein uL5">
    <location>
        <begin position="1"/>
        <end position="185"/>
    </location>
</feature>
<evidence type="ECO:0000255" key="1">
    <source>
        <dbReference type="HAMAP-Rule" id="MF_01333"/>
    </source>
</evidence>
<evidence type="ECO:0000305" key="2"/>
<gene>
    <name evidence="1" type="primary">rplE</name>
    <name type="ordered locus">BRADO3078</name>
</gene>
<dbReference type="EMBL" id="CU234118">
    <property type="protein sequence ID" value="CAL76880.1"/>
    <property type="molecule type" value="Genomic_DNA"/>
</dbReference>
<dbReference type="RefSeq" id="WP_006611850.1">
    <property type="nucleotide sequence ID" value="NC_009445.1"/>
</dbReference>
<dbReference type="SMR" id="A4YSK4"/>
<dbReference type="STRING" id="114615.BRADO3078"/>
<dbReference type="KEGG" id="bra:BRADO3078"/>
<dbReference type="eggNOG" id="COG0094">
    <property type="taxonomic scope" value="Bacteria"/>
</dbReference>
<dbReference type="HOGENOM" id="CLU_061015_2_1_5"/>
<dbReference type="OrthoDB" id="9806626at2"/>
<dbReference type="Proteomes" id="UP000001994">
    <property type="component" value="Chromosome"/>
</dbReference>
<dbReference type="GO" id="GO:1990904">
    <property type="term" value="C:ribonucleoprotein complex"/>
    <property type="evidence" value="ECO:0007669"/>
    <property type="project" value="UniProtKB-KW"/>
</dbReference>
<dbReference type="GO" id="GO:0005840">
    <property type="term" value="C:ribosome"/>
    <property type="evidence" value="ECO:0007669"/>
    <property type="project" value="UniProtKB-KW"/>
</dbReference>
<dbReference type="GO" id="GO:0019843">
    <property type="term" value="F:rRNA binding"/>
    <property type="evidence" value="ECO:0007669"/>
    <property type="project" value="UniProtKB-UniRule"/>
</dbReference>
<dbReference type="GO" id="GO:0003735">
    <property type="term" value="F:structural constituent of ribosome"/>
    <property type="evidence" value="ECO:0007669"/>
    <property type="project" value="InterPro"/>
</dbReference>
<dbReference type="GO" id="GO:0000049">
    <property type="term" value="F:tRNA binding"/>
    <property type="evidence" value="ECO:0007669"/>
    <property type="project" value="UniProtKB-UniRule"/>
</dbReference>
<dbReference type="GO" id="GO:0006412">
    <property type="term" value="P:translation"/>
    <property type="evidence" value="ECO:0007669"/>
    <property type="project" value="UniProtKB-UniRule"/>
</dbReference>
<dbReference type="FunFam" id="3.30.1440.10:FF:000001">
    <property type="entry name" value="50S ribosomal protein L5"/>
    <property type="match status" value="1"/>
</dbReference>
<dbReference type="Gene3D" id="3.30.1440.10">
    <property type="match status" value="1"/>
</dbReference>
<dbReference type="HAMAP" id="MF_01333_B">
    <property type="entry name" value="Ribosomal_uL5_B"/>
    <property type="match status" value="1"/>
</dbReference>
<dbReference type="InterPro" id="IPR002132">
    <property type="entry name" value="Ribosomal_uL5"/>
</dbReference>
<dbReference type="InterPro" id="IPR020930">
    <property type="entry name" value="Ribosomal_uL5_bac-type"/>
</dbReference>
<dbReference type="InterPro" id="IPR031309">
    <property type="entry name" value="Ribosomal_uL5_C"/>
</dbReference>
<dbReference type="InterPro" id="IPR020929">
    <property type="entry name" value="Ribosomal_uL5_CS"/>
</dbReference>
<dbReference type="InterPro" id="IPR022803">
    <property type="entry name" value="Ribosomal_uL5_dom_sf"/>
</dbReference>
<dbReference type="InterPro" id="IPR031310">
    <property type="entry name" value="Ribosomal_uL5_N"/>
</dbReference>
<dbReference type="NCBIfam" id="NF000585">
    <property type="entry name" value="PRK00010.1"/>
    <property type="match status" value="1"/>
</dbReference>
<dbReference type="PANTHER" id="PTHR11994">
    <property type="entry name" value="60S RIBOSOMAL PROTEIN L11-RELATED"/>
    <property type="match status" value="1"/>
</dbReference>
<dbReference type="Pfam" id="PF00281">
    <property type="entry name" value="Ribosomal_L5"/>
    <property type="match status" value="1"/>
</dbReference>
<dbReference type="Pfam" id="PF00673">
    <property type="entry name" value="Ribosomal_L5_C"/>
    <property type="match status" value="1"/>
</dbReference>
<dbReference type="PIRSF" id="PIRSF002161">
    <property type="entry name" value="Ribosomal_L5"/>
    <property type="match status" value="1"/>
</dbReference>
<dbReference type="SUPFAM" id="SSF55282">
    <property type="entry name" value="RL5-like"/>
    <property type="match status" value="1"/>
</dbReference>
<dbReference type="PROSITE" id="PS00358">
    <property type="entry name" value="RIBOSOMAL_L5"/>
    <property type="match status" value="1"/>
</dbReference>